<reference key="1">
    <citation type="submission" date="2006-08" db="EMBL/GenBank/DDBJ databases">
        <title>Complete sequence of chromosome 1 of Shewanella sp. MR-7.</title>
        <authorList>
            <person name="Copeland A."/>
            <person name="Lucas S."/>
            <person name="Lapidus A."/>
            <person name="Barry K."/>
            <person name="Detter J.C."/>
            <person name="Glavina del Rio T."/>
            <person name="Hammon N."/>
            <person name="Israni S."/>
            <person name="Dalin E."/>
            <person name="Tice H."/>
            <person name="Pitluck S."/>
            <person name="Kiss H."/>
            <person name="Brettin T."/>
            <person name="Bruce D."/>
            <person name="Han C."/>
            <person name="Tapia R."/>
            <person name="Gilna P."/>
            <person name="Schmutz J."/>
            <person name="Larimer F."/>
            <person name="Land M."/>
            <person name="Hauser L."/>
            <person name="Kyrpides N."/>
            <person name="Mikhailova N."/>
            <person name="Nealson K."/>
            <person name="Konstantinidis K."/>
            <person name="Klappenbach J."/>
            <person name="Tiedje J."/>
            <person name="Richardson P."/>
        </authorList>
    </citation>
    <scope>NUCLEOTIDE SEQUENCE [LARGE SCALE GENOMIC DNA]</scope>
    <source>
        <strain>MR-7</strain>
    </source>
</reference>
<evidence type="ECO:0000255" key="1">
    <source>
        <dbReference type="HAMAP-Rule" id="MF_00090"/>
    </source>
</evidence>
<sequence length="211" mass="23241">MTRVALTSAVNLAKKLQEAGIRHPAVLKAISHTPRELFLDNALAHKAYENTALPIGQGQTISQPYIVARMTELLLQHQPQKVLEVGTGSGYQAAILAQLVPELCTIERIKGLQIQARQRLKRLDLHNVSFKYGDGWQGWPNRSPFDGIMVTAAAAKVPEALLSQLAEGGVLIIPVGEETQQLMRFTRRSDRFSSEVIETVKFVPLVNGELA</sequence>
<protein>
    <recommendedName>
        <fullName evidence="1">Protein-L-isoaspartate O-methyltransferase</fullName>
        <ecNumber evidence="1">2.1.1.77</ecNumber>
    </recommendedName>
    <alternativeName>
        <fullName evidence="1">L-isoaspartyl protein carboxyl methyltransferase</fullName>
    </alternativeName>
    <alternativeName>
        <fullName evidence="1">Protein L-isoaspartyl methyltransferase</fullName>
    </alternativeName>
    <alternativeName>
        <fullName evidence="1">Protein-beta-aspartate methyltransferase</fullName>
        <shortName evidence="1">PIMT</shortName>
    </alternativeName>
</protein>
<name>PIMT_SHESR</name>
<organism>
    <name type="scientific">Shewanella sp. (strain MR-7)</name>
    <dbReference type="NCBI Taxonomy" id="60481"/>
    <lineage>
        <taxon>Bacteria</taxon>
        <taxon>Pseudomonadati</taxon>
        <taxon>Pseudomonadota</taxon>
        <taxon>Gammaproteobacteria</taxon>
        <taxon>Alteromonadales</taxon>
        <taxon>Shewanellaceae</taxon>
        <taxon>Shewanella</taxon>
    </lineage>
</organism>
<feature type="chain" id="PRO_1000093291" description="Protein-L-isoaspartate O-methyltransferase">
    <location>
        <begin position="1"/>
        <end position="211"/>
    </location>
</feature>
<feature type="active site" evidence="1">
    <location>
        <position position="62"/>
    </location>
</feature>
<gene>
    <name evidence="1" type="primary">pcm</name>
    <name type="ordered locus">Shewmr7_1192</name>
</gene>
<proteinExistence type="inferred from homology"/>
<dbReference type="EC" id="2.1.1.77" evidence="1"/>
<dbReference type="EMBL" id="CP000444">
    <property type="protein sequence ID" value="ABI42191.1"/>
    <property type="molecule type" value="Genomic_DNA"/>
</dbReference>
<dbReference type="SMR" id="Q0HXG4"/>
<dbReference type="KEGG" id="shm:Shewmr7_1192"/>
<dbReference type="HOGENOM" id="CLU_055432_2_0_6"/>
<dbReference type="GO" id="GO:0005737">
    <property type="term" value="C:cytoplasm"/>
    <property type="evidence" value="ECO:0007669"/>
    <property type="project" value="UniProtKB-SubCell"/>
</dbReference>
<dbReference type="GO" id="GO:0004719">
    <property type="term" value="F:protein-L-isoaspartate (D-aspartate) O-methyltransferase activity"/>
    <property type="evidence" value="ECO:0007669"/>
    <property type="project" value="UniProtKB-UniRule"/>
</dbReference>
<dbReference type="GO" id="GO:0032259">
    <property type="term" value="P:methylation"/>
    <property type="evidence" value="ECO:0007669"/>
    <property type="project" value="UniProtKB-KW"/>
</dbReference>
<dbReference type="GO" id="GO:0036211">
    <property type="term" value="P:protein modification process"/>
    <property type="evidence" value="ECO:0007669"/>
    <property type="project" value="UniProtKB-UniRule"/>
</dbReference>
<dbReference type="GO" id="GO:0030091">
    <property type="term" value="P:protein repair"/>
    <property type="evidence" value="ECO:0007669"/>
    <property type="project" value="UniProtKB-UniRule"/>
</dbReference>
<dbReference type="CDD" id="cd02440">
    <property type="entry name" value="AdoMet_MTases"/>
    <property type="match status" value="1"/>
</dbReference>
<dbReference type="FunFam" id="3.40.50.150:FF:000010">
    <property type="entry name" value="Protein-L-isoaspartate O-methyltransferase"/>
    <property type="match status" value="1"/>
</dbReference>
<dbReference type="Gene3D" id="3.40.50.150">
    <property type="entry name" value="Vaccinia Virus protein VP39"/>
    <property type="match status" value="1"/>
</dbReference>
<dbReference type="HAMAP" id="MF_00090">
    <property type="entry name" value="PIMT"/>
    <property type="match status" value="1"/>
</dbReference>
<dbReference type="InterPro" id="IPR000682">
    <property type="entry name" value="PCMT"/>
</dbReference>
<dbReference type="InterPro" id="IPR029063">
    <property type="entry name" value="SAM-dependent_MTases_sf"/>
</dbReference>
<dbReference type="NCBIfam" id="TIGR00080">
    <property type="entry name" value="pimt"/>
    <property type="match status" value="1"/>
</dbReference>
<dbReference type="NCBIfam" id="NF001453">
    <property type="entry name" value="PRK00312.1"/>
    <property type="match status" value="1"/>
</dbReference>
<dbReference type="PANTHER" id="PTHR11579">
    <property type="entry name" value="PROTEIN-L-ISOASPARTATE O-METHYLTRANSFERASE"/>
    <property type="match status" value="1"/>
</dbReference>
<dbReference type="PANTHER" id="PTHR11579:SF0">
    <property type="entry name" value="PROTEIN-L-ISOASPARTATE(D-ASPARTATE) O-METHYLTRANSFERASE"/>
    <property type="match status" value="1"/>
</dbReference>
<dbReference type="Pfam" id="PF01135">
    <property type="entry name" value="PCMT"/>
    <property type="match status" value="1"/>
</dbReference>
<dbReference type="SUPFAM" id="SSF53335">
    <property type="entry name" value="S-adenosyl-L-methionine-dependent methyltransferases"/>
    <property type="match status" value="1"/>
</dbReference>
<dbReference type="PROSITE" id="PS01279">
    <property type="entry name" value="PCMT"/>
    <property type="match status" value="1"/>
</dbReference>
<comment type="function">
    <text evidence="1">Catalyzes the methyl esterification of L-isoaspartyl residues in peptides and proteins that result from spontaneous decomposition of normal L-aspartyl and L-asparaginyl residues. It plays a role in the repair and/or degradation of damaged proteins.</text>
</comment>
<comment type="catalytic activity">
    <reaction evidence="1">
        <text>[protein]-L-isoaspartate + S-adenosyl-L-methionine = [protein]-L-isoaspartate alpha-methyl ester + S-adenosyl-L-homocysteine</text>
        <dbReference type="Rhea" id="RHEA:12705"/>
        <dbReference type="Rhea" id="RHEA-COMP:12143"/>
        <dbReference type="Rhea" id="RHEA-COMP:12144"/>
        <dbReference type="ChEBI" id="CHEBI:57856"/>
        <dbReference type="ChEBI" id="CHEBI:59789"/>
        <dbReference type="ChEBI" id="CHEBI:90596"/>
        <dbReference type="ChEBI" id="CHEBI:90598"/>
        <dbReference type="EC" id="2.1.1.77"/>
    </reaction>
</comment>
<comment type="subcellular location">
    <subcellularLocation>
        <location evidence="1">Cytoplasm</location>
    </subcellularLocation>
</comment>
<comment type="similarity">
    <text evidence="1">Belongs to the methyltransferase superfamily. L-isoaspartyl/D-aspartyl protein methyltransferase family.</text>
</comment>
<accession>Q0HXG4</accession>
<keyword id="KW-0963">Cytoplasm</keyword>
<keyword id="KW-0489">Methyltransferase</keyword>
<keyword id="KW-0949">S-adenosyl-L-methionine</keyword>
<keyword id="KW-0808">Transferase</keyword>